<organism>
    <name type="scientific">Bacillus subtilis (strain 168)</name>
    <dbReference type="NCBI Taxonomy" id="224308"/>
    <lineage>
        <taxon>Bacteria</taxon>
        <taxon>Bacillati</taxon>
        <taxon>Bacillota</taxon>
        <taxon>Bacilli</taxon>
        <taxon>Bacillales</taxon>
        <taxon>Bacillaceae</taxon>
        <taxon>Bacillus</taxon>
    </lineage>
</organism>
<name>TCYA_BACSU</name>
<proteinExistence type="evidence at protein level"/>
<feature type="signal peptide" evidence="1">
    <location>
        <begin position="1"/>
        <end position="19"/>
    </location>
</feature>
<feature type="chain" id="PRO_0000031778" description="L-cystine-binding protein TcyA">
    <location>
        <begin position="20"/>
        <end position="268"/>
    </location>
</feature>
<feature type="lipid moiety-binding region" description="N-palmitoyl cysteine" evidence="1">
    <location>
        <position position="20"/>
    </location>
</feature>
<feature type="lipid moiety-binding region" description="S-diacylglycerol cysteine" evidence="1">
    <location>
        <position position="20"/>
    </location>
</feature>
<feature type="sequence conflict" description="In Ref. 1; CAA54724." evidence="3" ref="1">
    <original>KR</original>
    <variation>NS</variation>
    <location>
        <begin position="81"/>
        <end position="82"/>
    </location>
</feature>
<feature type="sequence conflict" description="In Ref. 2; BAA08994." evidence="3" ref="2">
    <original>D</original>
    <variation>G</variation>
    <location>
        <position position="95"/>
    </location>
</feature>
<feature type="sequence conflict" description="In Ref. 1; CAA54724." evidence="3" ref="1">
    <original>DK</original>
    <variation>NQ</variation>
    <location>
        <begin position="120"/>
        <end position="121"/>
    </location>
</feature>
<feature type="sequence conflict" description="In Ref. 2; BAA08994." evidence="3" ref="2">
    <original>G</original>
    <variation>A</variation>
    <location>
        <position position="190"/>
    </location>
</feature>
<evidence type="ECO:0000255" key="1">
    <source>
        <dbReference type="PROSITE-ProRule" id="PRU00303"/>
    </source>
</evidence>
<evidence type="ECO:0000269" key="2">
    <source>
    </source>
</evidence>
<evidence type="ECO:0000305" key="3"/>
<dbReference type="EMBL" id="X77636">
    <property type="protein sequence ID" value="CAA54724.1"/>
    <property type="molecule type" value="Genomic_DNA"/>
</dbReference>
<dbReference type="EMBL" id="D50453">
    <property type="protein sequence ID" value="BAA08994.1"/>
    <property type="molecule type" value="Genomic_DNA"/>
</dbReference>
<dbReference type="EMBL" id="AL009126">
    <property type="protein sequence ID" value="CAB12155.2"/>
    <property type="molecule type" value="Genomic_DNA"/>
</dbReference>
<dbReference type="PIR" id="E69761">
    <property type="entry name" value="E69761"/>
</dbReference>
<dbReference type="RefSeq" id="NP_388243.2">
    <property type="nucleotide sequence ID" value="NC_000964.3"/>
</dbReference>
<dbReference type="RefSeq" id="WP_003246699.1">
    <property type="nucleotide sequence ID" value="NZ_OZ025638.1"/>
</dbReference>
<dbReference type="SMR" id="P42199"/>
<dbReference type="FunCoup" id="P42199">
    <property type="interactions" value="154"/>
</dbReference>
<dbReference type="STRING" id="224308.BSU03610"/>
<dbReference type="TCDB" id="3.A.1.3.14">
    <property type="family name" value="the atp-binding cassette (abc) superfamily"/>
</dbReference>
<dbReference type="jPOST" id="P42199"/>
<dbReference type="PaxDb" id="224308-BSU03610"/>
<dbReference type="EnsemblBacteria" id="CAB12155">
    <property type="protein sequence ID" value="CAB12155"/>
    <property type="gene ID" value="BSU_03610"/>
</dbReference>
<dbReference type="GeneID" id="938298"/>
<dbReference type="KEGG" id="bsu:BSU03610"/>
<dbReference type="PATRIC" id="fig|224308.179.peg.380"/>
<dbReference type="eggNOG" id="COG0834">
    <property type="taxonomic scope" value="Bacteria"/>
</dbReference>
<dbReference type="InParanoid" id="P42199"/>
<dbReference type="OrthoDB" id="8613538at2"/>
<dbReference type="PhylomeDB" id="P42199"/>
<dbReference type="BioCyc" id="BSUB:BSU03610-MONOMER"/>
<dbReference type="Proteomes" id="UP000001570">
    <property type="component" value="Chromosome"/>
</dbReference>
<dbReference type="GO" id="GO:0005886">
    <property type="term" value="C:plasma membrane"/>
    <property type="evidence" value="ECO:0007669"/>
    <property type="project" value="UniProtKB-SubCell"/>
</dbReference>
<dbReference type="GO" id="GO:0006865">
    <property type="term" value="P:amino acid transport"/>
    <property type="evidence" value="ECO:0007669"/>
    <property type="project" value="UniProtKB-KW"/>
</dbReference>
<dbReference type="CDD" id="cd13711">
    <property type="entry name" value="PBP2_Ngo0372_TcyA"/>
    <property type="match status" value="1"/>
</dbReference>
<dbReference type="Gene3D" id="3.40.190.10">
    <property type="entry name" value="Periplasmic binding protein-like II"/>
    <property type="match status" value="2"/>
</dbReference>
<dbReference type="InterPro" id="IPR018313">
    <property type="entry name" value="SBP_3_CS"/>
</dbReference>
<dbReference type="InterPro" id="IPR001638">
    <property type="entry name" value="Solute-binding_3/MltF_N"/>
</dbReference>
<dbReference type="PANTHER" id="PTHR35936:SF34">
    <property type="entry name" value="ABC TRANSPORTER EXTRACELLULAR-BINDING PROTEIN YCKB-RELATED"/>
    <property type="match status" value="1"/>
</dbReference>
<dbReference type="PANTHER" id="PTHR35936">
    <property type="entry name" value="MEMBRANE-BOUND LYTIC MUREIN TRANSGLYCOSYLASE F"/>
    <property type="match status" value="1"/>
</dbReference>
<dbReference type="Pfam" id="PF00497">
    <property type="entry name" value="SBP_bac_3"/>
    <property type="match status" value="1"/>
</dbReference>
<dbReference type="SMART" id="SM00062">
    <property type="entry name" value="PBPb"/>
    <property type="match status" value="1"/>
</dbReference>
<dbReference type="SUPFAM" id="SSF53850">
    <property type="entry name" value="Periplasmic binding protein-like II"/>
    <property type="match status" value="1"/>
</dbReference>
<dbReference type="PROSITE" id="PS51257">
    <property type="entry name" value="PROKAR_LIPOPROTEIN"/>
    <property type="match status" value="1"/>
</dbReference>
<dbReference type="PROSITE" id="PS01039">
    <property type="entry name" value="SBP_BACTERIAL_3"/>
    <property type="match status" value="1"/>
</dbReference>
<keyword id="KW-0029">Amino-acid transport</keyword>
<keyword id="KW-1003">Cell membrane</keyword>
<keyword id="KW-0449">Lipoprotein</keyword>
<keyword id="KW-0472">Membrane</keyword>
<keyword id="KW-0564">Palmitate</keyword>
<keyword id="KW-1185">Reference proteome</keyword>
<keyword id="KW-0732">Signal</keyword>
<keyword id="KW-0813">Transport</keyword>
<accession>P42199</accession>
<accession>P94402</accession>
<reference key="1">
    <citation type="journal article" date="1995" name="Microbiology">
        <title>An operon encoding a novel ABC-type transport system in Bacillus subtilis.</title>
        <authorList>
            <person name="Rodriguez F."/>
            <person name="Grandi G."/>
        </authorList>
    </citation>
    <scope>NUCLEOTIDE SEQUENCE [GENOMIC DNA]</scope>
    <source>
        <strain>168 / JH642</strain>
    </source>
</reference>
<reference key="2">
    <citation type="journal article" date="1996" name="Microbiology">
        <title>The 25 degrees-36 degrees region of the Bacillus subtilis chromosome: determination of the sequence of a 146 kb segment and identification of 113 genes.</title>
        <authorList>
            <person name="Yamane K."/>
            <person name="Kumano M."/>
            <person name="Kurita K."/>
        </authorList>
    </citation>
    <scope>NUCLEOTIDE SEQUENCE [GENOMIC DNA]</scope>
    <source>
        <strain>168</strain>
    </source>
</reference>
<reference key="3">
    <citation type="journal article" date="1997" name="Nature">
        <title>The complete genome sequence of the Gram-positive bacterium Bacillus subtilis.</title>
        <authorList>
            <person name="Kunst F."/>
            <person name="Ogasawara N."/>
            <person name="Moszer I."/>
            <person name="Albertini A.M."/>
            <person name="Alloni G."/>
            <person name="Azevedo V."/>
            <person name="Bertero M.G."/>
            <person name="Bessieres P."/>
            <person name="Bolotin A."/>
            <person name="Borchert S."/>
            <person name="Borriss R."/>
            <person name="Boursier L."/>
            <person name="Brans A."/>
            <person name="Braun M."/>
            <person name="Brignell S.C."/>
            <person name="Bron S."/>
            <person name="Brouillet S."/>
            <person name="Bruschi C.V."/>
            <person name="Caldwell B."/>
            <person name="Capuano V."/>
            <person name="Carter N.M."/>
            <person name="Choi S.-K."/>
            <person name="Codani J.-J."/>
            <person name="Connerton I.F."/>
            <person name="Cummings N.J."/>
            <person name="Daniel R.A."/>
            <person name="Denizot F."/>
            <person name="Devine K.M."/>
            <person name="Duesterhoeft A."/>
            <person name="Ehrlich S.D."/>
            <person name="Emmerson P.T."/>
            <person name="Entian K.-D."/>
            <person name="Errington J."/>
            <person name="Fabret C."/>
            <person name="Ferrari E."/>
            <person name="Foulger D."/>
            <person name="Fritz C."/>
            <person name="Fujita M."/>
            <person name="Fujita Y."/>
            <person name="Fuma S."/>
            <person name="Galizzi A."/>
            <person name="Galleron N."/>
            <person name="Ghim S.-Y."/>
            <person name="Glaser P."/>
            <person name="Goffeau A."/>
            <person name="Golightly E.J."/>
            <person name="Grandi G."/>
            <person name="Guiseppi G."/>
            <person name="Guy B.J."/>
            <person name="Haga K."/>
            <person name="Haiech J."/>
            <person name="Harwood C.R."/>
            <person name="Henaut A."/>
            <person name="Hilbert H."/>
            <person name="Holsappel S."/>
            <person name="Hosono S."/>
            <person name="Hullo M.-F."/>
            <person name="Itaya M."/>
            <person name="Jones L.-M."/>
            <person name="Joris B."/>
            <person name="Karamata D."/>
            <person name="Kasahara Y."/>
            <person name="Klaerr-Blanchard M."/>
            <person name="Klein C."/>
            <person name="Kobayashi Y."/>
            <person name="Koetter P."/>
            <person name="Koningstein G."/>
            <person name="Krogh S."/>
            <person name="Kumano M."/>
            <person name="Kurita K."/>
            <person name="Lapidus A."/>
            <person name="Lardinois S."/>
            <person name="Lauber J."/>
            <person name="Lazarevic V."/>
            <person name="Lee S.-M."/>
            <person name="Levine A."/>
            <person name="Liu H."/>
            <person name="Masuda S."/>
            <person name="Mauel C."/>
            <person name="Medigue C."/>
            <person name="Medina N."/>
            <person name="Mellado R.P."/>
            <person name="Mizuno M."/>
            <person name="Moestl D."/>
            <person name="Nakai S."/>
            <person name="Noback M."/>
            <person name="Noone D."/>
            <person name="O'Reilly M."/>
            <person name="Ogawa K."/>
            <person name="Ogiwara A."/>
            <person name="Oudega B."/>
            <person name="Park S.-H."/>
            <person name="Parro V."/>
            <person name="Pohl T.M."/>
            <person name="Portetelle D."/>
            <person name="Porwollik S."/>
            <person name="Prescott A.M."/>
            <person name="Presecan E."/>
            <person name="Pujic P."/>
            <person name="Purnelle B."/>
            <person name="Rapoport G."/>
            <person name="Rey M."/>
            <person name="Reynolds S."/>
            <person name="Rieger M."/>
            <person name="Rivolta C."/>
            <person name="Rocha E."/>
            <person name="Roche B."/>
            <person name="Rose M."/>
            <person name="Sadaie Y."/>
            <person name="Sato T."/>
            <person name="Scanlan E."/>
            <person name="Schleich S."/>
            <person name="Schroeter R."/>
            <person name="Scoffone F."/>
            <person name="Sekiguchi J."/>
            <person name="Sekowska A."/>
            <person name="Seror S.J."/>
            <person name="Serror P."/>
            <person name="Shin B.-S."/>
            <person name="Soldo B."/>
            <person name="Sorokin A."/>
            <person name="Tacconi E."/>
            <person name="Takagi T."/>
            <person name="Takahashi H."/>
            <person name="Takemaru K."/>
            <person name="Takeuchi M."/>
            <person name="Tamakoshi A."/>
            <person name="Tanaka T."/>
            <person name="Terpstra P."/>
            <person name="Tognoni A."/>
            <person name="Tosato V."/>
            <person name="Uchiyama S."/>
            <person name="Vandenbol M."/>
            <person name="Vannier F."/>
            <person name="Vassarotti A."/>
            <person name="Viari A."/>
            <person name="Wambutt R."/>
            <person name="Wedler E."/>
            <person name="Wedler H."/>
            <person name="Weitzenegger T."/>
            <person name="Winters P."/>
            <person name="Wipat A."/>
            <person name="Yamamoto H."/>
            <person name="Yamane K."/>
            <person name="Yasumoto K."/>
            <person name="Yata K."/>
            <person name="Yoshida K."/>
            <person name="Yoshikawa H.-F."/>
            <person name="Zumstein E."/>
            <person name="Yoshikawa H."/>
            <person name="Danchin A."/>
        </authorList>
    </citation>
    <scope>NUCLEOTIDE SEQUENCE [LARGE SCALE GENOMIC DNA]</scope>
    <source>
        <strain>168</strain>
    </source>
</reference>
<reference key="4">
    <citation type="journal article" date="2009" name="Microbiology">
        <title>From a consortium sequence to a unified sequence: the Bacillus subtilis 168 reference genome a decade later.</title>
        <authorList>
            <person name="Barbe V."/>
            <person name="Cruveiller S."/>
            <person name="Kunst F."/>
            <person name="Lenoble P."/>
            <person name="Meurice G."/>
            <person name="Sekowska A."/>
            <person name="Vallenet D."/>
            <person name="Wang T."/>
            <person name="Moszer I."/>
            <person name="Medigue C."/>
            <person name="Danchin A."/>
        </authorList>
    </citation>
    <scope>SEQUENCE REVISION TO 95 AND 190</scope>
</reference>
<reference key="5">
    <citation type="journal article" date="2004" name="J. Bacteriol.">
        <title>Three different systems participate in L-cystine uptake in Bacillus subtilis.</title>
        <authorList>
            <person name="Burguiere P."/>
            <person name="Auger S."/>
            <person name="Hullo M.-F."/>
            <person name="Danchin A."/>
            <person name="Martin-Verstraete I."/>
        </authorList>
    </citation>
    <scope>FUNCTION IN L-CYSTINE TRANSPORT</scope>
    <source>
        <strain>168</strain>
    </source>
</reference>
<protein>
    <recommendedName>
        <fullName>L-cystine-binding protein TcyA</fullName>
    </recommendedName>
</protein>
<gene>
    <name type="primary">tcyA</name>
    <name type="synonym">yckK</name>
    <name type="ordered locus">BSU03610</name>
</gene>
<comment type="function">
    <text evidence="2">Part of the ABC transporter complex TcyABC involved in L-cystine import.</text>
</comment>
<comment type="subunit">
    <text evidence="3">The complex is composed of two ATP-binding proteins (TcyC), two transmembrane proteins (TcyB) and a solute-binding protein (TcyA).</text>
</comment>
<comment type="subcellular location">
    <subcellularLocation>
        <location evidence="3">Cell membrane</location>
        <topology evidence="3">Lipid-anchor</topology>
    </subcellularLocation>
</comment>
<comment type="similarity">
    <text evidence="3">Belongs to the bacterial solute-binding protein 3 family.</text>
</comment>
<sequence length="268" mass="29514">MKKALLALFMVVSIAALAACGAGNDNQSKDNAKDGDLWASIKKKGVLTVGTEGTYEPFTYHDKDTDKLTGYDVEVITEVAKRLGLKVDFKETQWDSMFAGLNSKRFDVVANQVGKTDREDKYDFSDKYTTSRAVVVTKKDNNDIKSEADVKGKTSAQSLTSNYNKLATNAGAKVEGVEGMAQALQMIQQGRVDMTYNDKLAVLNYLKTSGNKNVKIAFETGEPQSTYFTFRKGSGEVVDQVNKALKEMKEDGTLSKISKKWFGEDVSK</sequence>